<keyword id="KW-1003">Cell membrane</keyword>
<keyword id="KW-0378">Hydrolase</keyword>
<keyword id="KW-0472">Membrane</keyword>
<keyword id="KW-0645">Protease</keyword>
<keyword id="KW-0673">Quorum sensing</keyword>
<keyword id="KW-0812">Transmembrane</keyword>
<keyword id="KW-1133">Transmembrane helix</keyword>
<keyword id="KW-0843">Virulence</keyword>
<comment type="function">
    <text evidence="1">Essential for the production of a quorum sensing system signal molecule, the autoinducing peptide (AIP). This quorum sensing system is responsible for the regulation of the expression of virulence factor genes. Involved in the proteolytic processing of AgrD, the precursor of AIP.</text>
</comment>
<comment type="subcellular location">
    <subcellularLocation>
        <location evidence="1">Cell membrane</location>
        <topology evidence="1">Multi-pass membrane protein</topology>
    </subcellularLocation>
</comment>
<comment type="similarity">
    <text evidence="1">Belongs to the AgrB family.</text>
</comment>
<dbReference type="EC" id="3.4.-.-" evidence="1"/>
<dbReference type="EMBL" id="CP000046">
    <property type="protein sequence ID" value="AAW36988.1"/>
    <property type="molecule type" value="Genomic_DNA"/>
</dbReference>
<dbReference type="RefSeq" id="WP_001105707.1">
    <property type="nucleotide sequence ID" value="NZ_JBGOFO010000006.1"/>
</dbReference>
<dbReference type="MEROPS" id="C75.001"/>
<dbReference type="KEGG" id="sac:SACOL2023"/>
<dbReference type="HOGENOM" id="CLU_098969_2_2_9"/>
<dbReference type="Proteomes" id="UP000000530">
    <property type="component" value="Chromosome"/>
</dbReference>
<dbReference type="GO" id="GO:0005886">
    <property type="term" value="C:plasma membrane"/>
    <property type="evidence" value="ECO:0007669"/>
    <property type="project" value="UniProtKB-SubCell"/>
</dbReference>
<dbReference type="GO" id="GO:0008233">
    <property type="term" value="F:peptidase activity"/>
    <property type="evidence" value="ECO:0007669"/>
    <property type="project" value="UniProtKB-UniRule"/>
</dbReference>
<dbReference type="GO" id="GO:0006508">
    <property type="term" value="P:proteolysis"/>
    <property type="evidence" value="ECO:0007669"/>
    <property type="project" value="UniProtKB-KW"/>
</dbReference>
<dbReference type="GO" id="GO:0009372">
    <property type="term" value="P:quorum sensing"/>
    <property type="evidence" value="ECO:0007669"/>
    <property type="project" value="UniProtKB-UniRule"/>
</dbReference>
<dbReference type="HAMAP" id="MF_00784">
    <property type="entry name" value="AgrB"/>
    <property type="match status" value="1"/>
</dbReference>
<dbReference type="InterPro" id="IPR006741">
    <property type="entry name" value="AgrB"/>
</dbReference>
<dbReference type="Pfam" id="PF04647">
    <property type="entry name" value="AgrB"/>
    <property type="match status" value="1"/>
</dbReference>
<dbReference type="SMART" id="SM00793">
    <property type="entry name" value="AgrB"/>
    <property type="match status" value="1"/>
</dbReference>
<feature type="chain" id="PRO_0000168119" description="Accessory gene regulator protein B">
    <location>
        <begin position="1"/>
        <end position="189"/>
    </location>
</feature>
<feature type="transmembrane region" description="Helical" evidence="1">
    <location>
        <begin position="49"/>
        <end position="69"/>
    </location>
</feature>
<feature type="transmembrane region" description="Helical" evidence="1">
    <location>
        <begin position="81"/>
        <end position="100"/>
    </location>
</feature>
<feature type="transmembrane region" description="Helical" evidence="1">
    <location>
        <begin position="110"/>
        <end position="130"/>
    </location>
</feature>
<feature type="transmembrane region" description="Helical" evidence="1">
    <location>
        <begin position="143"/>
        <end position="163"/>
    </location>
</feature>
<feature type="transmembrane region" description="Helical" evidence="1">
    <location>
        <begin position="164"/>
        <end position="184"/>
    </location>
</feature>
<name>AGRB_STAAC</name>
<organism>
    <name type="scientific">Staphylococcus aureus (strain COL)</name>
    <dbReference type="NCBI Taxonomy" id="93062"/>
    <lineage>
        <taxon>Bacteria</taxon>
        <taxon>Bacillati</taxon>
        <taxon>Bacillota</taxon>
        <taxon>Bacilli</taxon>
        <taxon>Bacillales</taxon>
        <taxon>Staphylococcaceae</taxon>
        <taxon>Staphylococcus</taxon>
    </lineage>
</organism>
<proteinExistence type="inferred from homology"/>
<protein>
    <recommendedName>
        <fullName evidence="1">Accessory gene regulator protein B</fullName>
        <ecNumber evidence="1">3.4.-.-</ecNumber>
    </recommendedName>
</protein>
<evidence type="ECO:0000255" key="1">
    <source>
        <dbReference type="HAMAP-Rule" id="MF_00784"/>
    </source>
</evidence>
<sequence length="189" mass="21930">MNYFDNKIDQFATYLQKRNNLDHIQFLQVRLGMQVLAKNIGKLIVMYTIAYILNIFLFTLITNLTFYLIRRHAHGAHAPSSFWCYVESIILFILLPLVIVNFHINFLIMIILTVISLGVISVYAPAATKKKPIPVRLIKRKKYYAIIVSLTLFIITLIIKEPFAQFIQLGIIIEAITLLPIFFIKEDLK</sequence>
<reference key="1">
    <citation type="journal article" date="2005" name="J. Bacteriol.">
        <title>Insights on evolution of virulence and resistance from the complete genome analysis of an early methicillin-resistant Staphylococcus aureus strain and a biofilm-producing methicillin-resistant Staphylococcus epidermidis strain.</title>
        <authorList>
            <person name="Gill S.R."/>
            <person name="Fouts D.E."/>
            <person name="Archer G.L."/>
            <person name="Mongodin E.F."/>
            <person name="DeBoy R.T."/>
            <person name="Ravel J."/>
            <person name="Paulsen I.T."/>
            <person name="Kolonay J.F."/>
            <person name="Brinkac L.M."/>
            <person name="Beanan M.J."/>
            <person name="Dodson R.J."/>
            <person name="Daugherty S.C."/>
            <person name="Madupu R."/>
            <person name="Angiuoli S.V."/>
            <person name="Durkin A.S."/>
            <person name="Haft D.H."/>
            <person name="Vamathevan J.J."/>
            <person name="Khouri H."/>
            <person name="Utterback T.R."/>
            <person name="Lee C."/>
            <person name="Dimitrov G."/>
            <person name="Jiang L."/>
            <person name="Qin H."/>
            <person name="Weidman J."/>
            <person name="Tran K."/>
            <person name="Kang K.H."/>
            <person name="Hance I.R."/>
            <person name="Nelson K.E."/>
            <person name="Fraser C.M."/>
        </authorList>
    </citation>
    <scope>NUCLEOTIDE SEQUENCE [LARGE SCALE GENOMIC DNA]</scope>
    <source>
        <strain>COL</strain>
    </source>
</reference>
<gene>
    <name evidence="1" type="primary">agrB</name>
    <name type="ordered locus">SACOL2023</name>
</gene>
<accession>Q5HEG5</accession>